<proteinExistence type="evidence at transcript level"/>
<organism>
    <name type="scientific">Bos taurus</name>
    <name type="common">Bovine</name>
    <dbReference type="NCBI Taxonomy" id="9913"/>
    <lineage>
        <taxon>Eukaryota</taxon>
        <taxon>Metazoa</taxon>
        <taxon>Chordata</taxon>
        <taxon>Craniata</taxon>
        <taxon>Vertebrata</taxon>
        <taxon>Euteleostomi</taxon>
        <taxon>Mammalia</taxon>
        <taxon>Eutheria</taxon>
        <taxon>Laurasiatheria</taxon>
        <taxon>Artiodactyla</taxon>
        <taxon>Ruminantia</taxon>
        <taxon>Pecora</taxon>
        <taxon>Bovidae</taxon>
        <taxon>Bovinae</taxon>
        <taxon>Bos</taxon>
    </lineage>
</organism>
<reference key="1">
    <citation type="journal article" date="1997" name="J. Biol. Chem.">
        <title>Alpha-latrotoxin receptor, latrophilin, is a novel member of the secretin family of G protein-coupled receptors.</title>
        <authorList>
            <person name="Lelianova V.G."/>
            <person name="Davletov B.A."/>
            <person name="Sterling A."/>
            <person name="Rahman M.A."/>
            <person name="Grishin E.V."/>
            <person name="Totty N.F."/>
            <person name="Ushkaryov Y.A."/>
        </authorList>
    </citation>
    <scope>NUCLEOTIDE SEQUENCE [MRNA] (ISOFORMS 1 AND 2)</scope>
    <source>
        <tissue>Brain</tissue>
    </source>
</reference>
<reference key="2">
    <citation type="journal article" date="1999" name="FEBS Lett.">
        <title>The latrophilin family: multiply spliced G protein-coupled receptors with differential tissue distribution.</title>
        <authorList>
            <person name="Matsushita H."/>
            <person name="Lelianova V.G."/>
            <person name="Ushkaryov Y.A."/>
        </authorList>
    </citation>
    <scope>NUCLEOTIDE SEQUENCE [MRNA] (ISOFORMS 1 AND 2)</scope>
    <scope>TISSUE SPECIFICITY</scope>
    <source>
        <tissue>Brain</tissue>
    </source>
</reference>
<accession>O97831</accession>
<accession>O97830</accession>
<name>AGRL1_BOVIN</name>
<evidence type="ECO:0000250" key="1"/>
<evidence type="ECO:0000250" key="2">
    <source>
        <dbReference type="UniProtKB" id="O88917"/>
    </source>
</evidence>
<evidence type="ECO:0000250" key="3">
    <source>
        <dbReference type="UniProtKB" id="O94910"/>
    </source>
</evidence>
<evidence type="ECO:0000250" key="4">
    <source>
        <dbReference type="UniProtKB" id="Q80TR1"/>
    </source>
</evidence>
<evidence type="ECO:0000255" key="5"/>
<evidence type="ECO:0000255" key="6">
    <source>
        <dbReference type="PROSITE-ProRule" id="PRU00098"/>
    </source>
</evidence>
<evidence type="ECO:0000255" key="7">
    <source>
        <dbReference type="PROSITE-ProRule" id="PRU00260"/>
    </source>
</evidence>
<evidence type="ECO:0000255" key="8">
    <source>
        <dbReference type="PROSITE-ProRule" id="PRU00446"/>
    </source>
</evidence>
<evidence type="ECO:0000256" key="9">
    <source>
        <dbReference type="SAM" id="MobiDB-lite"/>
    </source>
</evidence>
<evidence type="ECO:0000269" key="10">
    <source>
    </source>
</evidence>
<evidence type="ECO:0000303" key="11">
    <source>
    </source>
</evidence>
<evidence type="ECO:0000303" key="12">
    <source>
    </source>
</evidence>
<evidence type="ECO:0000305" key="13"/>
<sequence>MARLAAVLWSLCVTAILVTSATQGLSRAGLPFGLMRRELACEGYPIELRCPGSDVIMVENANYGRTDDKICDADPFQMENVQCYLPDAFKIMSQRCNNRTQCVVVAGSDAFPDPCPGTYKYLEVQYDCVPYKVKQKVFVCPGTLQKVLEPTSTHESEHQSGAWCKDPLQAGDRIYVMPWIPYRTDTLTEYASWEDYVAARHTTTYRLPNRVDGTGFVVYDGAVFYNKERTRNIVKYDLRTRIKSGETVINTANYHDTSPYRWGGKTDIDLAVDENGLWVIYATEGNNGRLVVSQLNPYTLRFEGTWETGYDKRSASNAFMVCGVLYVLRSVYVDDDSEAAGNRVDYAFNTNANREEPVSLAFPNPYQFVSSVDYNPRDNQLYVWNNYFVVRYSLEFGPPDPSAGPATSPPLSTTTTARPTPLTSTASPAATTPLRRAPLTTHPVGAINQLGPDLPPATAPAPSTRRPPAPNLHVSPELFCEPREVRRVQWPATQQGMLVERPCPKGTRGIASFQCLPALGLWNPRGPDLSNCTSPWVNQVAQKIKSGENAANIASELARHTRGSIYAGDVSSSVKLMEQLLDILDAQLQALRPIERESAGKNYNKMHKRERTCKDYIKAVVETVDNLLRPEALESWKDMNATEQAHTATMLLDVLEEGAFLLADNVREPARFLAAKQNVVLEVTVLNTEGQVQELVFPQEYPSENSIQLSANTIKQNSRNGVVKVVFILYNNLGLFLSTENATVKLAGEAGSGGPGGASLVVNSQVIAASINKESSRVFLMDPVIFTVAHLEAKNHFNANCSFWNYSERSMLGYWSTQGCRLVESNKTHTTCACSHLTNFAVLMAHREIYQGRINELLLSVITWVGIVISLVCLAICISTFCFLRGLQTDRNTIHKNLCINLFLAELLFLVGIDKTQYEIACPIFAGLLHYFFLAAFSWLCLEGVHLYLLLVEVFESEYSRTKYYYLGGYCFPALVVGIAAAIDYRSYGTEKACWLRVDNYFIWSFIGPVSFVIVVNLVFLMVTLHKMVRSSSVLKPDSSRLDNIKSWALGAIALLFLLGLTWAFGLLFINKESVVMAYLFTTFNAFQGVFIFVFHCALQKKVHKEYSKCLRHSYCCIRSPPGGAHGSLKTSAMRSNARYYTGTQSRIRRMWNDTVRKQTESSFMAGDINSTPTLNRGTMGNHLLTNPVLQPRGGTSPYNTLIAESVGFNPSSPPVFNSPGSYREPKHPLGGREACGMDTLPLNGNFNNSYSLRSGDFPPGDGAPEPPRGRNLADAAAFEKMIISELVHNNLRGGSSGAKGPPPPEPPVPPVPGGSGEEEAGGPGADRAEIELLYKALEEPLLLPRAQSVLYQSDLDESESCTAEDGATSRPLSSPPGRDSLYASGANLRDSPSYPDSSPEGPSEALPPPPPAPPGPPEIYYTSRPPALVARNPLQGYYQVRRPSHEGYLAAPGLEGPGPDGDGQMQLVTSL</sequence>
<protein>
    <recommendedName>
        <fullName evidence="3">Adhesion G protein-coupled receptor L1</fullName>
    </recommendedName>
    <alternativeName>
        <fullName evidence="3">Calcium-independent alpha-latrotoxin receptor 1</fullName>
        <shortName evidence="3">CIRL-1</shortName>
    </alternativeName>
    <alternativeName>
        <fullName evidence="3">Latrophilin-1</fullName>
    </alternativeName>
</protein>
<gene>
    <name evidence="3" type="primary">ADGRL1</name>
    <name evidence="3" type="synonym">LPHN1</name>
</gene>
<feature type="signal peptide" evidence="1">
    <location>
        <begin position="1"/>
        <end position="24"/>
    </location>
</feature>
<feature type="chain" id="PRO_0000012906" description="Adhesion G protein-coupled receptor L1">
    <location>
        <begin position="25"/>
        <end position="1472"/>
    </location>
</feature>
<feature type="topological domain" description="Extracellular" evidence="5">
    <location>
        <begin position="25"/>
        <end position="857"/>
    </location>
</feature>
<feature type="transmembrane region" description="Helical; Name=1" evidence="5">
    <location>
        <begin position="858"/>
        <end position="878"/>
    </location>
</feature>
<feature type="topological domain" description="Cytoplasmic" evidence="5">
    <location>
        <begin position="879"/>
        <end position="892"/>
    </location>
</feature>
<feature type="transmembrane region" description="Helical; Name=2" evidence="5">
    <location>
        <begin position="893"/>
        <end position="913"/>
    </location>
</feature>
<feature type="topological domain" description="Extracellular" evidence="5">
    <location>
        <begin position="914"/>
        <end position="919"/>
    </location>
</feature>
<feature type="transmembrane region" description="Helical; Name=3" evidence="5">
    <location>
        <begin position="920"/>
        <end position="940"/>
    </location>
</feature>
<feature type="topological domain" description="Cytoplasmic" evidence="5">
    <location>
        <begin position="941"/>
        <end position="963"/>
    </location>
</feature>
<feature type="transmembrane region" description="Helical; Name=4" evidence="5">
    <location>
        <begin position="964"/>
        <end position="984"/>
    </location>
</feature>
<feature type="topological domain" description="Extracellular" evidence="5">
    <location>
        <begin position="985"/>
        <end position="1001"/>
    </location>
</feature>
<feature type="transmembrane region" description="Helical; Name=5" evidence="5">
    <location>
        <begin position="1002"/>
        <end position="1022"/>
    </location>
</feature>
<feature type="topological domain" description="Cytoplasmic" evidence="5">
    <location>
        <begin position="1023"/>
        <end position="1049"/>
    </location>
</feature>
<feature type="transmembrane region" description="Helical; Name=6" evidence="5">
    <location>
        <begin position="1050"/>
        <end position="1070"/>
    </location>
</feature>
<feature type="topological domain" description="Extracellular" evidence="5">
    <location>
        <begin position="1071"/>
        <end position="1074"/>
    </location>
</feature>
<feature type="transmembrane region" description="Helical; Name=7" evidence="5">
    <location>
        <begin position="1075"/>
        <end position="1095"/>
    </location>
</feature>
<feature type="topological domain" description="Cytoplasmic" evidence="5">
    <location>
        <begin position="1096"/>
        <end position="1472"/>
    </location>
</feature>
<feature type="domain" description="SUEL-type lectin" evidence="7">
    <location>
        <begin position="40"/>
        <end position="129"/>
    </location>
</feature>
<feature type="domain" description="Olfactomedin-like" evidence="8">
    <location>
        <begin position="139"/>
        <end position="398"/>
    </location>
</feature>
<feature type="domain" description="GAIN-B" evidence="6">
    <location>
        <begin position="669"/>
        <end position="850"/>
    </location>
</feature>
<feature type="region of interest" description="Disordered" evidence="9">
    <location>
        <begin position="400"/>
        <end position="468"/>
    </location>
</feature>
<feature type="region of interest" description="GPS" evidence="6">
    <location>
        <begin position="801"/>
        <end position="850"/>
    </location>
</feature>
<feature type="region of interest" description="Disordered" evidence="9">
    <location>
        <begin position="1247"/>
        <end position="1271"/>
    </location>
</feature>
<feature type="region of interest" description="Disordered" evidence="9">
    <location>
        <begin position="1291"/>
        <end position="1325"/>
    </location>
</feature>
<feature type="region of interest" description="Disordered" evidence="9">
    <location>
        <begin position="1358"/>
        <end position="1427"/>
    </location>
</feature>
<feature type="region of interest" description="Disordered" evidence="9">
    <location>
        <begin position="1449"/>
        <end position="1472"/>
    </location>
</feature>
<feature type="compositionally biased region" description="Low complexity" evidence="9">
    <location>
        <begin position="405"/>
        <end position="441"/>
    </location>
</feature>
<feature type="compositionally biased region" description="Pro residues" evidence="9">
    <location>
        <begin position="453"/>
        <end position="468"/>
    </location>
</feature>
<feature type="compositionally biased region" description="Pro residues" evidence="9">
    <location>
        <begin position="1301"/>
        <end position="1313"/>
    </location>
</feature>
<feature type="compositionally biased region" description="Pro residues" evidence="9">
    <location>
        <begin position="1406"/>
        <end position="1418"/>
    </location>
</feature>
<feature type="binding site" evidence="4">
    <location>
        <position position="42"/>
    </location>
    <ligand>
        <name>alpha-L-rhamnose</name>
        <dbReference type="ChEBI" id="CHEBI:27907"/>
    </ligand>
</feature>
<feature type="binding site" evidence="4">
    <location>
        <begin position="117"/>
        <end position="120"/>
    </location>
    <ligand>
        <name>alpha-L-rhamnose</name>
        <dbReference type="ChEBI" id="CHEBI:27907"/>
    </ligand>
</feature>
<feature type="site" description="Cleavage; by autolysis" evidence="6">
    <location>
        <begin position="837"/>
        <end position="838"/>
    </location>
</feature>
<feature type="modified residue" description="Omega-N-methylarginine" evidence="4">
    <location>
        <position position="1193"/>
    </location>
</feature>
<feature type="modified residue" description="Phosphoserine" evidence="4">
    <location>
        <position position="1219"/>
    </location>
</feature>
<feature type="modified residue" description="Phosphoserine" evidence="4">
    <location>
        <position position="1471"/>
    </location>
</feature>
<feature type="glycosylation site" description="N-linked (GlcNAc...) asparagine" evidence="5">
    <location>
        <position position="98"/>
    </location>
</feature>
<feature type="glycosylation site" description="N-linked (GlcNAc...) asparagine" evidence="5">
    <location>
        <position position="531"/>
    </location>
</feature>
<feature type="glycosylation site" description="N-linked (GlcNAc...) asparagine" evidence="5">
    <location>
        <position position="640"/>
    </location>
</feature>
<feature type="glycosylation site" description="N-linked (GlcNAc...) asparagine" evidence="5">
    <location>
        <position position="741"/>
    </location>
</feature>
<feature type="glycosylation site" description="N-linked (GlcNAc...) asparagine" evidence="5">
    <location>
        <position position="800"/>
    </location>
</feature>
<feature type="glycosylation site" description="N-linked (GlcNAc...) asparagine" evidence="5">
    <location>
        <position position="805"/>
    </location>
</feature>
<feature type="glycosylation site" description="N-linked (GlcNAc...) asparagine" evidence="5">
    <location>
        <position position="826"/>
    </location>
</feature>
<feature type="disulfide bond" evidence="8">
    <location>
        <begin position="41"/>
        <end position="71"/>
    </location>
</feature>
<feature type="disulfide bond" evidence="8">
    <location>
        <begin position="50"/>
        <end position="128"/>
    </location>
</feature>
<feature type="disulfide bond" evidence="8">
    <location>
        <begin position="83"/>
        <end position="115"/>
    </location>
</feature>
<feature type="disulfide bond" evidence="8">
    <location>
        <begin position="96"/>
        <end position="102"/>
    </location>
</feature>
<feature type="disulfide bond" evidence="8">
    <location>
        <begin position="140"/>
        <end position="322"/>
    </location>
</feature>
<feature type="disulfide bond" evidence="8">
    <location>
        <begin position="480"/>
        <end position="515"/>
    </location>
</feature>
<feature type="disulfide bond" evidence="8">
    <location>
        <begin position="503"/>
        <end position="532"/>
    </location>
</feature>
<feature type="disulfide bond" evidence="6">
    <location>
        <begin position="801"/>
        <end position="832"/>
    </location>
</feature>
<feature type="disulfide bond" evidence="6">
    <location>
        <begin position="820"/>
        <end position="834"/>
    </location>
</feature>
<feature type="splice variant" id="VSP_022136" description="In isoform 2." evidence="11 12">
    <original>KVKQKV</original>
    <variation>I</variation>
    <location>
        <begin position="132"/>
        <end position="137"/>
    </location>
</feature>
<keyword id="KW-0025">Alternative splicing</keyword>
<keyword id="KW-1003">Cell membrane</keyword>
<keyword id="KW-0966">Cell projection</keyword>
<keyword id="KW-1015">Disulfide bond</keyword>
<keyword id="KW-0297">G-protein coupled receptor</keyword>
<keyword id="KW-0325">Glycoprotein</keyword>
<keyword id="KW-0430">Lectin</keyword>
<keyword id="KW-0472">Membrane</keyword>
<keyword id="KW-0488">Methylation</keyword>
<keyword id="KW-0597">Phosphoprotein</keyword>
<keyword id="KW-0675">Receptor</keyword>
<keyword id="KW-1185">Reference proteome</keyword>
<keyword id="KW-0732">Signal</keyword>
<keyword id="KW-0770">Synapse</keyword>
<keyword id="KW-0771">Synaptosome</keyword>
<keyword id="KW-0807">Transducer</keyword>
<keyword id="KW-0812">Transmembrane</keyword>
<keyword id="KW-1133">Transmembrane helix</keyword>
<dbReference type="EMBL" id="AF111097">
    <property type="protein sequence ID" value="AAD09191.1"/>
    <property type="molecule type" value="mRNA"/>
</dbReference>
<dbReference type="EMBL" id="AF111098">
    <property type="protein sequence ID" value="AAD09192.1"/>
    <property type="molecule type" value="mRNA"/>
</dbReference>
<dbReference type="PIR" id="T18411">
    <property type="entry name" value="T18411"/>
</dbReference>
<dbReference type="PIR" id="T18413">
    <property type="entry name" value="T18413"/>
</dbReference>
<dbReference type="RefSeq" id="NP_001107200.1">
    <molecule id="O97831-1"/>
    <property type="nucleotide sequence ID" value="NM_001113728.1"/>
</dbReference>
<dbReference type="RefSeq" id="XP_005208683.1">
    <molecule id="O97831-2"/>
    <property type="nucleotide sequence ID" value="XM_005208626.5"/>
</dbReference>
<dbReference type="BMRB" id="O97831"/>
<dbReference type="SMR" id="O97831"/>
<dbReference type="FunCoup" id="O97831">
    <property type="interactions" value="2015"/>
</dbReference>
<dbReference type="STRING" id="9913.ENSBTAP00000073270"/>
<dbReference type="MEROPS" id="P02.010"/>
<dbReference type="GlyCosmos" id="O97831">
    <property type="glycosylation" value="7 sites, No reported glycans"/>
</dbReference>
<dbReference type="GlyGen" id="O97831">
    <property type="glycosylation" value="7 sites"/>
</dbReference>
<dbReference type="PaxDb" id="9913-ENSBTAP00000036113"/>
<dbReference type="GeneID" id="788252"/>
<dbReference type="KEGG" id="bta:788252"/>
<dbReference type="CTD" id="22859"/>
<dbReference type="VEuPathDB" id="HostDB:ENSBTAG00000003675"/>
<dbReference type="eggNOG" id="KOG3545">
    <property type="taxonomic scope" value="Eukaryota"/>
</dbReference>
<dbReference type="eggNOG" id="KOG4193">
    <property type="taxonomic scope" value="Eukaryota"/>
</dbReference>
<dbReference type="eggNOG" id="KOG4729">
    <property type="taxonomic scope" value="Eukaryota"/>
</dbReference>
<dbReference type="InParanoid" id="O97831"/>
<dbReference type="OrthoDB" id="1100386at2759"/>
<dbReference type="Proteomes" id="UP000009136">
    <property type="component" value="Chromosome 7"/>
</dbReference>
<dbReference type="Bgee" id="ENSBTAG00000003675">
    <property type="expression patterns" value="Expressed in vas deferens and 103 other cell types or tissues"/>
</dbReference>
<dbReference type="GO" id="GO:0030424">
    <property type="term" value="C:axon"/>
    <property type="evidence" value="ECO:0000250"/>
    <property type="project" value="UniProtKB"/>
</dbReference>
<dbReference type="GO" id="GO:0005615">
    <property type="term" value="C:extracellular space"/>
    <property type="evidence" value="ECO:0000318"/>
    <property type="project" value="GO_Central"/>
</dbReference>
<dbReference type="GO" id="GO:0030426">
    <property type="term" value="C:growth cone"/>
    <property type="evidence" value="ECO:0000250"/>
    <property type="project" value="UniProtKB"/>
</dbReference>
<dbReference type="GO" id="GO:0043005">
    <property type="term" value="C:neuron projection"/>
    <property type="evidence" value="ECO:0000250"/>
    <property type="project" value="UniProtKB"/>
</dbReference>
<dbReference type="GO" id="GO:0005886">
    <property type="term" value="C:plasma membrane"/>
    <property type="evidence" value="ECO:0000250"/>
    <property type="project" value="UniProtKB"/>
</dbReference>
<dbReference type="GO" id="GO:0042734">
    <property type="term" value="C:presynaptic membrane"/>
    <property type="evidence" value="ECO:0000250"/>
    <property type="project" value="UniProtKB"/>
</dbReference>
<dbReference type="GO" id="GO:0045202">
    <property type="term" value="C:synapse"/>
    <property type="evidence" value="ECO:0000250"/>
    <property type="project" value="UniProtKB"/>
</dbReference>
<dbReference type="GO" id="GO:0030246">
    <property type="term" value="F:carbohydrate binding"/>
    <property type="evidence" value="ECO:0007669"/>
    <property type="project" value="UniProtKB-KW"/>
</dbReference>
<dbReference type="GO" id="GO:0050839">
    <property type="term" value="F:cell adhesion molecule binding"/>
    <property type="evidence" value="ECO:0000250"/>
    <property type="project" value="UniProtKB"/>
</dbReference>
<dbReference type="GO" id="GO:0004930">
    <property type="term" value="F:G protein-coupled receptor activity"/>
    <property type="evidence" value="ECO:0007669"/>
    <property type="project" value="UniProtKB-KW"/>
</dbReference>
<dbReference type="GO" id="GO:0016524">
    <property type="term" value="F:latrotoxin receptor activity"/>
    <property type="evidence" value="ECO:0000250"/>
    <property type="project" value="UniProtKB"/>
</dbReference>
<dbReference type="GO" id="GO:0007166">
    <property type="term" value="P:cell surface receptor signaling pathway"/>
    <property type="evidence" value="ECO:0007669"/>
    <property type="project" value="InterPro"/>
</dbReference>
<dbReference type="GO" id="GO:0007165">
    <property type="term" value="P:signal transduction"/>
    <property type="evidence" value="ECO:0000318"/>
    <property type="project" value="GO_Central"/>
</dbReference>
<dbReference type="CDD" id="cd16007">
    <property type="entry name" value="7tmB2_Latrophilin-1"/>
    <property type="match status" value="1"/>
</dbReference>
<dbReference type="CDD" id="cd22844">
    <property type="entry name" value="Gal_Rha_Lectin_LPHN1"/>
    <property type="match status" value="1"/>
</dbReference>
<dbReference type="FunFam" id="1.20.1070.10:FF:000011">
    <property type="entry name" value="Adhesion G protein-coupled receptor L2"/>
    <property type="match status" value="1"/>
</dbReference>
<dbReference type="FunFam" id="1.25.40.610:FF:000001">
    <property type="entry name" value="Adhesion G protein-coupled receptor L2"/>
    <property type="match status" value="1"/>
</dbReference>
<dbReference type="FunFam" id="2.60.120.740:FF:000001">
    <property type="entry name" value="Adhesion G protein-coupled receptor L2"/>
    <property type="match status" value="1"/>
</dbReference>
<dbReference type="FunFam" id="2.60.220.50:FF:000001">
    <property type="entry name" value="Adhesion G protein-coupled receptor L2"/>
    <property type="match status" value="1"/>
</dbReference>
<dbReference type="FunFam" id="4.10.1240.10:FF:000001">
    <property type="entry name" value="Adhesion G protein-coupled receptor L2"/>
    <property type="match status" value="1"/>
</dbReference>
<dbReference type="Gene3D" id="1.25.40.610">
    <property type="match status" value="1"/>
</dbReference>
<dbReference type="Gene3D" id="2.60.120.740">
    <property type="match status" value="1"/>
</dbReference>
<dbReference type="Gene3D" id="2.60.220.50">
    <property type="match status" value="1"/>
</dbReference>
<dbReference type="Gene3D" id="4.10.1240.10">
    <property type="entry name" value="GPCR, family 2, extracellular hormone receptor domain"/>
    <property type="match status" value="1"/>
</dbReference>
<dbReference type="Gene3D" id="1.20.1070.10">
    <property type="entry name" value="Rhodopsin 7-helix transmembrane proteins"/>
    <property type="match status" value="1"/>
</dbReference>
<dbReference type="InterPro" id="IPR057244">
    <property type="entry name" value="GAIN_B"/>
</dbReference>
<dbReference type="InterPro" id="IPR032471">
    <property type="entry name" value="GAIN_dom_N"/>
</dbReference>
<dbReference type="InterPro" id="IPR046338">
    <property type="entry name" value="GAIN_dom_sf"/>
</dbReference>
<dbReference type="InterPro" id="IPR017981">
    <property type="entry name" value="GPCR_2-like_7TM"/>
</dbReference>
<dbReference type="InterPro" id="IPR036445">
    <property type="entry name" value="GPCR_2_extracell_dom_sf"/>
</dbReference>
<dbReference type="InterPro" id="IPR001879">
    <property type="entry name" value="GPCR_2_extracellular_dom"/>
</dbReference>
<dbReference type="InterPro" id="IPR003924">
    <property type="entry name" value="GPCR_2_latrophilin"/>
</dbReference>
<dbReference type="InterPro" id="IPR003334">
    <property type="entry name" value="GPCR_2_latrophilin_rcpt_C"/>
</dbReference>
<dbReference type="InterPro" id="IPR000832">
    <property type="entry name" value="GPCR_2_secretin-like"/>
</dbReference>
<dbReference type="InterPro" id="IPR017983">
    <property type="entry name" value="GPCR_2_secretin-like_CS"/>
</dbReference>
<dbReference type="InterPro" id="IPR000203">
    <property type="entry name" value="GPS"/>
</dbReference>
<dbReference type="InterPro" id="IPR031234">
    <property type="entry name" value="Latrophilin-1_TM"/>
</dbReference>
<dbReference type="InterPro" id="IPR000922">
    <property type="entry name" value="Lectin_gal-bd_dom"/>
</dbReference>
<dbReference type="InterPro" id="IPR043159">
    <property type="entry name" value="Lectin_gal-bd_sf"/>
</dbReference>
<dbReference type="InterPro" id="IPR003112">
    <property type="entry name" value="Olfac-like_dom"/>
</dbReference>
<dbReference type="PANTHER" id="PTHR12011:SF62">
    <property type="entry name" value="ADHESION G PROTEIN-COUPLED RECEPTOR L1"/>
    <property type="match status" value="1"/>
</dbReference>
<dbReference type="PANTHER" id="PTHR12011">
    <property type="entry name" value="ADHESION G-PROTEIN COUPLED RECEPTOR"/>
    <property type="match status" value="1"/>
</dbReference>
<dbReference type="Pfam" id="PF00002">
    <property type="entry name" value="7tm_2"/>
    <property type="match status" value="1"/>
</dbReference>
<dbReference type="Pfam" id="PF16489">
    <property type="entry name" value="GAIN"/>
    <property type="match status" value="1"/>
</dbReference>
<dbReference type="Pfam" id="PF01825">
    <property type="entry name" value="GPS"/>
    <property type="match status" value="1"/>
</dbReference>
<dbReference type="Pfam" id="PF02793">
    <property type="entry name" value="HRM"/>
    <property type="match status" value="1"/>
</dbReference>
<dbReference type="Pfam" id="PF02354">
    <property type="entry name" value="Latrophilin"/>
    <property type="match status" value="1"/>
</dbReference>
<dbReference type="Pfam" id="PF02191">
    <property type="entry name" value="OLF"/>
    <property type="match status" value="1"/>
</dbReference>
<dbReference type="Pfam" id="PF02140">
    <property type="entry name" value="SUEL_Lectin"/>
    <property type="match status" value="1"/>
</dbReference>
<dbReference type="PRINTS" id="PR00249">
    <property type="entry name" value="GPCRSECRETIN"/>
</dbReference>
<dbReference type="PRINTS" id="PR01444">
    <property type="entry name" value="LATROPHILIN"/>
</dbReference>
<dbReference type="SMART" id="SM00303">
    <property type="entry name" value="GPS"/>
    <property type="match status" value="1"/>
</dbReference>
<dbReference type="SMART" id="SM00008">
    <property type="entry name" value="HormR"/>
    <property type="match status" value="1"/>
</dbReference>
<dbReference type="SMART" id="SM00284">
    <property type="entry name" value="OLF"/>
    <property type="match status" value="1"/>
</dbReference>
<dbReference type="SUPFAM" id="SSF81321">
    <property type="entry name" value="Family A G protein-coupled receptor-like"/>
    <property type="match status" value="1"/>
</dbReference>
<dbReference type="PROSITE" id="PS00650">
    <property type="entry name" value="G_PROTEIN_RECEP_F2_2"/>
    <property type="match status" value="1"/>
</dbReference>
<dbReference type="PROSITE" id="PS50227">
    <property type="entry name" value="G_PROTEIN_RECEP_F2_3"/>
    <property type="match status" value="1"/>
</dbReference>
<dbReference type="PROSITE" id="PS50261">
    <property type="entry name" value="G_PROTEIN_RECEP_F2_4"/>
    <property type="match status" value="1"/>
</dbReference>
<dbReference type="PROSITE" id="PS50221">
    <property type="entry name" value="GAIN_B"/>
    <property type="match status" value="1"/>
</dbReference>
<dbReference type="PROSITE" id="PS51132">
    <property type="entry name" value="OLF"/>
    <property type="match status" value="1"/>
</dbReference>
<dbReference type="PROSITE" id="PS50228">
    <property type="entry name" value="SUEL_LECTIN"/>
    <property type="match status" value="1"/>
</dbReference>
<comment type="function">
    <text evidence="2">Calcium-independent receptor of high affinity for alpha-latrotoxin, an excitatory neurotoxin present in black widow spider venom which triggers massive exocytosis from neurons and neuroendocrine cells. Receptor for TENM2 that mediates heterophilic synaptic cell-cell contact and postsynaptic specialization. Receptor probably implicated in the regulation of exocytosis (By similarity).</text>
</comment>
<comment type="subunit">
    <text evidence="2 4">Forms a heterodimer, consisting of a large extracellular region (p120) non-covalently linked to a seven-transmembrane moiety (p85). Interacts with syntaxin and with proteins of the SHANK family via the PDZ domain. Interacts (via extracellular domain) with FLRT1, FLRT2 and FLRT3 (via extracellular domain) (By similarity).</text>
</comment>
<comment type="subcellular location">
    <subcellularLocation>
        <location>Cell membrane</location>
        <topology>Multi-pass membrane protein</topology>
    </subcellularLocation>
    <subcellularLocation>
        <location evidence="2">Cell projection</location>
        <location evidence="2">Axon</location>
    </subcellularLocation>
    <subcellularLocation>
        <location evidence="2">Cell projection</location>
        <location evidence="2">Growth cone</location>
    </subcellularLocation>
    <subcellularLocation>
        <location evidence="2">Synapse</location>
    </subcellularLocation>
    <subcellularLocation>
        <location evidence="2">Presynaptic cell membrane</location>
    </subcellularLocation>
    <subcellularLocation>
        <location evidence="2">Synapse</location>
        <location evidence="2">Synaptosome</location>
    </subcellularLocation>
    <text evidence="2">Colocalizes with TENM2 on the cell surface, across intercellular junctions and on nerve terminals near synaptic clefts.</text>
</comment>
<comment type="alternative products">
    <event type="alternative splicing"/>
    <isoform>
        <id>O97831-1</id>
        <name>1</name>
        <sequence type="displayed"/>
    </isoform>
    <isoform>
        <id>O97831-2</id>
        <name>2</name>
        <sequence type="described" ref="VSP_022136"/>
    </isoform>
</comment>
<comment type="tissue specificity">
    <text evidence="10">Brain-specific expression but low levels are also detected in kidney, lung and spleen.</text>
</comment>
<comment type="domain">
    <text evidence="1">The extracellular domain coupled to the a single transmembrane region are sufficient for full responsiveness to alpha-latrotoxin.</text>
</comment>
<comment type="PTM">
    <text evidence="2">Autoproteolytically cleaved into 2 subunits, an extracellular subunit and a seven-transmembrane subunit. This proteolytic processing takes place early in the biosynthetic pathway, either in the endoplasmic reticulum or in the early compartment of the Golgi apparatus.</text>
</comment>
<comment type="similarity">
    <text evidence="13">Belongs to the G-protein coupled receptor 2 family. Adhesion G-protein coupled receptor (ADGR) subfamily.</text>
</comment>